<reference key="1">
    <citation type="journal article" date="2000" name="Arch. Microbiol.">
        <title>Secreted lipases of Candida albicans: cloning, characterisation and expression analysis of a new gene family with at least ten members.</title>
        <authorList>
            <person name="Hube B."/>
            <person name="Stehr F."/>
            <person name="Bossenz M."/>
            <person name="Mazur A."/>
            <person name="Kretschmar M."/>
            <person name="Schaefer W."/>
        </authorList>
    </citation>
    <scope>NUCLEOTIDE SEQUENCE [GENOMIC DNA]</scope>
    <scope>SUBCELLULAR LOCATION</scope>
    <scope>FUNCTION</scope>
    <scope>INDUCTION</scope>
    <source>
        <strain>SC5314 / ATCC MYA-2876</strain>
    </source>
</reference>
<reference key="2">
    <citation type="journal article" date="2004" name="Proc. Natl. Acad. Sci. U.S.A.">
        <title>The diploid genome sequence of Candida albicans.</title>
        <authorList>
            <person name="Jones T."/>
            <person name="Federspiel N.A."/>
            <person name="Chibana H."/>
            <person name="Dungan J."/>
            <person name="Kalman S."/>
            <person name="Magee B.B."/>
            <person name="Newport G."/>
            <person name="Thorstenson Y.R."/>
            <person name="Agabian N."/>
            <person name="Magee P.T."/>
            <person name="Davis R.W."/>
            <person name="Scherer S."/>
        </authorList>
    </citation>
    <scope>NUCLEOTIDE SEQUENCE [LARGE SCALE GENOMIC DNA]</scope>
    <source>
        <strain>SC5314 / ATCC MYA-2876</strain>
    </source>
</reference>
<reference key="3">
    <citation type="journal article" date="2007" name="Genome Biol.">
        <title>Assembly of the Candida albicans genome into sixteen supercontigs aligned on the eight chromosomes.</title>
        <authorList>
            <person name="van het Hoog M."/>
            <person name="Rast T.J."/>
            <person name="Martchenko M."/>
            <person name="Grindle S."/>
            <person name="Dignard D."/>
            <person name="Hogues H."/>
            <person name="Cuomo C."/>
            <person name="Berriman M."/>
            <person name="Scherer S."/>
            <person name="Magee B.B."/>
            <person name="Whiteway M."/>
            <person name="Chibana H."/>
            <person name="Nantel A."/>
            <person name="Magee P.T."/>
        </authorList>
    </citation>
    <scope>GENOME REANNOTATION</scope>
    <source>
        <strain>SC5314 / ATCC MYA-2876</strain>
    </source>
</reference>
<reference key="4">
    <citation type="journal article" date="2013" name="Genome Biol.">
        <title>Assembly of a phased diploid Candida albicans genome facilitates allele-specific measurements and provides a simple model for repeat and indel structure.</title>
        <authorList>
            <person name="Muzzey D."/>
            <person name="Schwartz K."/>
            <person name="Weissman J.S."/>
            <person name="Sherlock G."/>
        </authorList>
    </citation>
    <scope>NUCLEOTIDE SEQUENCE [LARGE SCALE GENOMIC DNA]</scope>
    <scope>GENOME REANNOTATION</scope>
    <source>
        <strain>SC5314 / ATCC MYA-2876</strain>
    </source>
</reference>
<reference key="5">
    <citation type="journal article" date="2004" name="FEMS Yeast Res.">
        <title>Expression analysis of the Candida albicans lipase gene family during experimental infections and in patient samples.</title>
        <authorList>
            <person name="Stehr F."/>
            <person name="Felk A."/>
            <person name="Gacser A."/>
            <person name="Kretschmar M."/>
            <person name="Maehnss B."/>
            <person name="Neuber K."/>
            <person name="Hube B."/>
            <person name="Schaefer W."/>
        </authorList>
    </citation>
    <scope>INDUCTION</scope>
</reference>
<reference key="6">
    <citation type="journal article" date="2005" name="FEMS Microbiol. Lett.">
        <title>Differential Candida albicans lipase gene expression during alimentary tract colonization and infection.</title>
        <authorList>
            <person name="Schofield D.A."/>
            <person name="Westwater C."/>
            <person name="Warner T."/>
            <person name="Balish E."/>
        </authorList>
    </citation>
    <scope>INDUCTION</scope>
</reference>
<accession>Q9P4E5</accession>
<accession>A0A1D8PEM6</accession>
<accession>Q5APE3</accession>
<evidence type="ECO:0000250" key="1">
    <source>
        <dbReference type="UniProtKB" id="O94091"/>
    </source>
</evidence>
<evidence type="ECO:0000250" key="2">
    <source>
        <dbReference type="UniProtKB" id="W3VKA4"/>
    </source>
</evidence>
<evidence type="ECO:0000255" key="3"/>
<evidence type="ECO:0000269" key="4">
    <source>
    </source>
</evidence>
<evidence type="ECO:0000303" key="5">
    <source>
    </source>
</evidence>
<evidence type="ECO:0000305" key="6"/>
<evidence type="ECO:0000305" key="7">
    <source>
    </source>
</evidence>
<feature type="signal peptide" evidence="3">
    <location>
        <begin position="1"/>
        <end position="16"/>
    </location>
</feature>
<feature type="chain" id="PRO_0000017829" description="Lipase 10">
    <location>
        <begin position="17"/>
        <end position="465"/>
    </location>
</feature>
<feature type="active site" description="Charge relay system" evidence="2">
    <location>
        <position position="196"/>
    </location>
</feature>
<feature type="active site" description="Charge relay system" evidence="2">
    <location>
        <position position="348"/>
    </location>
</feature>
<feature type="active site" description="Charge relay system" evidence="2">
    <location>
        <position position="381"/>
    </location>
</feature>
<feature type="glycosylation site" description="N-linked (GlcNAc...) asparagine" evidence="3">
    <location>
        <position position="231"/>
    </location>
</feature>
<feature type="glycosylation site" description="N-linked (GlcNAc...) asparagine" evidence="3">
    <location>
        <position position="319"/>
    </location>
</feature>
<feature type="disulfide bond" evidence="2">
    <location>
        <begin position="112"/>
        <end position="285"/>
    </location>
</feature>
<feature type="disulfide bond" evidence="2">
    <location>
        <begin position="364"/>
        <end position="409"/>
    </location>
</feature>
<keyword id="KW-1015">Disulfide bond</keyword>
<keyword id="KW-0325">Glycoprotein</keyword>
<keyword id="KW-0378">Hydrolase</keyword>
<keyword id="KW-0442">Lipid degradation</keyword>
<keyword id="KW-0443">Lipid metabolism</keyword>
<keyword id="KW-1185">Reference proteome</keyword>
<keyword id="KW-0964">Secreted</keyword>
<keyword id="KW-0732">Signal</keyword>
<keyword id="KW-0843">Virulence</keyword>
<sequence length="465" mass="50469">MKTLLIFLAFLSSIFASLIGLTPPSKDSFYSPPVGFATAKPGDILKIRNTPSAPSSLYLPIVVKNAWQLLIRSEDSFGNPNAFVATLIQPLNANPSKLVSYQSWEDASHIDCSPSYGMQFKSPATTVTTQIDMTLIVPLLQNGYYVIIPDYEGPKSTFTVGRQSGKATLNSIRAALQTGAFSGIKKTAKVALWGYSGGSLATGWAISLQSKYAPELKENLIGAAVGGFATNITAVAEAVDGTVFSGFIPLALNGLANEYPDFKKRLYGEVKLSARSTMEKGSQNCLAASLVGYPMSQYFTGQNRAFEKGWGLLQDEVFNKTIEDNLLLKLDKTYLPQVPVLIYHGTIDEIIPIKDANAQYQIWCDRGIQSLEFAEDLSAGHLAETFTGAPAALSWIDARFSGKPAVNGCQRTIRSSNVLYPGISITIRIYFEGISKTIFGVNLGSGVNADKSISNKFFAYIRKYI</sequence>
<protein>
    <recommendedName>
        <fullName evidence="5">Lipase 10</fullName>
        <ecNumber evidence="1">3.1.1.3</ecNumber>
    </recommendedName>
</protein>
<name>LIP10_CANAL</name>
<organism>
    <name type="scientific">Candida albicans (strain SC5314 / ATCC MYA-2876)</name>
    <name type="common">Yeast</name>
    <dbReference type="NCBI Taxonomy" id="237561"/>
    <lineage>
        <taxon>Eukaryota</taxon>
        <taxon>Fungi</taxon>
        <taxon>Dikarya</taxon>
        <taxon>Ascomycota</taxon>
        <taxon>Saccharomycotina</taxon>
        <taxon>Pichiomycetes</taxon>
        <taxon>Debaryomycetaceae</taxon>
        <taxon>Candida/Lodderomyces clade</taxon>
        <taxon>Candida</taxon>
    </lineage>
</organism>
<dbReference type="EC" id="3.1.1.3" evidence="1"/>
<dbReference type="EMBL" id="AF191323">
    <property type="protein sequence ID" value="AAF79930.1"/>
    <property type="molecule type" value="Genomic_DNA"/>
</dbReference>
<dbReference type="EMBL" id="CP017623">
    <property type="protein sequence ID" value="AOW26591.1"/>
    <property type="molecule type" value="Genomic_DNA"/>
</dbReference>
<dbReference type="RefSeq" id="XP_723508.1">
    <property type="nucleotide sequence ID" value="XM_718415.1"/>
</dbReference>
<dbReference type="SMR" id="Q9P4E5"/>
<dbReference type="STRING" id="237561.Q9P4E5"/>
<dbReference type="ESTHER" id="canal-LIP10">
    <property type="family name" value="Fungal-Bact_LIP"/>
</dbReference>
<dbReference type="GlyCosmos" id="Q9P4E5">
    <property type="glycosylation" value="2 sites, No reported glycans"/>
</dbReference>
<dbReference type="EnsemblFungi" id="C1_09590C_A-T">
    <property type="protein sequence ID" value="C1_09590C_A-T-p1"/>
    <property type="gene ID" value="C1_09590C_A"/>
</dbReference>
<dbReference type="GeneID" id="3634889"/>
<dbReference type="KEGG" id="cal:CAALFM_C109590CA"/>
<dbReference type="CGD" id="CAL0000198152">
    <property type="gene designation" value="LIP10"/>
</dbReference>
<dbReference type="VEuPathDB" id="FungiDB:C1_09590C_A"/>
<dbReference type="eggNOG" id="ENOG502S2P7">
    <property type="taxonomic scope" value="Eukaryota"/>
</dbReference>
<dbReference type="HOGENOM" id="CLU_029538_5_0_1"/>
<dbReference type="InParanoid" id="Q9P4E5"/>
<dbReference type="OMA" id="IPMFVYK"/>
<dbReference type="OrthoDB" id="2373480at2759"/>
<dbReference type="PRO" id="PR:Q9P4E5"/>
<dbReference type="Proteomes" id="UP000000559">
    <property type="component" value="Chromosome 1"/>
</dbReference>
<dbReference type="GO" id="GO:0005576">
    <property type="term" value="C:extracellular region"/>
    <property type="evidence" value="ECO:0007669"/>
    <property type="project" value="UniProtKB-SubCell"/>
</dbReference>
<dbReference type="GO" id="GO:0016298">
    <property type="term" value="F:lipase activity"/>
    <property type="evidence" value="ECO:0000314"/>
    <property type="project" value="CGD"/>
</dbReference>
<dbReference type="GO" id="GO:0004806">
    <property type="term" value="F:triacylglycerol lipase activity"/>
    <property type="evidence" value="ECO:0007669"/>
    <property type="project" value="UniProtKB-EC"/>
</dbReference>
<dbReference type="GO" id="GO:0016042">
    <property type="term" value="P:lipid catabolic process"/>
    <property type="evidence" value="ECO:0007669"/>
    <property type="project" value="UniProtKB-KW"/>
</dbReference>
<dbReference type="FunFam" id="1.10.260.130:FF:000001">
    <property type="entry name" value="Lipase 2"/>
    <property type="match status" value="1"/>
</dbReference>
<dbReference type="Gene3D" id="1.10.260.130">
    <property type="match status" value="1"/>
</dbReference>
<dbReference type="Gene3D" id="3.40.50.1820">
    <property type="entry name" value="alpha/beta hydrolase"/>
    <property type="match status" value="1"/>
</dbReference>
<dbReference type="InterPro" id="IPR029058">
    <property type="entry name" value="AB_hydrolase_fold"/>
</dbReference>
<dbReference type="InterPro" id="IPR005152">
    <property type="entry name" value="Lipase_secreted"/>
</dbReference>
<dbReference type="PANTHER" id="PTHR34853">
    <property type="match status" value="1"/>
</dbReference>
<dbReference type="PANTHER" id="PTHR34853:SF1">
    <property type="entry name" value="LIPASE 5"/>
    <property type="match status" value="1"/>
</dbReference>
<dbReference type="Pfam" id="PF03583">
    <property type="entry name" value="LIP"/>
    <property type="match status" value="1"/>
</dbReference>
<dbReference type="PIRSF" id="PIRSF029171">
    <property type="entry name" value="Esterase_LipA"/>
    <property type="match status" value="1"/>
</dbReference>
<dbReference type="SUPFAM" id="SSF53474">
    <property type="entry name" value="alpha/beta-Hydrolases"/>
    <property type="match status" value="1"/>
</dbReference>
<gene>
    <name evidence="5" type="primary">LIP10</name>
    <name type="ordered locus">CAALFM_C109590CA</name>
    <name type="ORF">CaO19.12285</name>
    <name type="ORF">CaO19.4822</name>
</gene>
<comment type="function">
    <text evidence="4 7">Secreted lipase that is able to hydrolyze both the neutral triacylglycerols and the monopalmitate ester Tween 40, allowing the use of hydrolyzed products as carbon sources (PubMed:11131027). Has broad lipolytic activity, which may be important for colonization and subsequent infection, therefore contributing to the persistence and virulence in human tissue (Probable).</text>
</comment>
<comment type="catalytic activity">
    <reaction evidence="1">
        <text>a triacylglycerol + H2O = a diacylglycerol + a fatty acid + H(+)</text>
        <dbReference type="Rhea" id="RHEA:12044"/>
        <dbReference type="ChEBI" id="CHEBI:15377"/>
        <dbReference type="ChEBI" id="CHEBI:15378"/>
        <dbReference type="ChEBI" id="CHEBI:17855"/>
        <dbReference type="ChEBI" id="CHEBI:18035"/>
        <dbReference type="ChEBI" id="CHEBI:28868"/>
        <dbReference type="EC" id="3.1.1.3"/>
    </reaction>
    <physiologicalReaction direction="left-to-right" evidence="1">
        <dbReference type="Rhea" id="RHEA:12045"/>
    </physiologicalReaction>
</comment>
<comment type="subcellular location">
    <subcellularLocation>
        <location evidence="4">Secreted</location>
    </subcellularLocation>
</comment>
<comment type="induction">
    <text evidence="4">Expression is not induced in medium containing Tween 40 as the sole source of carbon.</text>
</comment>
<comment type="similarity">
    <text evidence="6">Belongs to the AB hydrolase superfamily. Lipase family. Class Lip subfamily.</text>
</comment>
<proteinExistence type="evidence at transcript level"/>